<protein>
    <recommendedName>
        <fullName evidence="1">Macrodomain Ter protein</fullName>
    </recommendedName>
</protein>
<name>MATP_ECOLC</name>
<keyword id="KW-0131">Cell cycle</keyword>
<keyword id="KW-0132">Cell division</keyword>
<keyword id="KW-0963">Cytoplasm</keyword>
<keyword id="KW-0238">DNA-binding</keyword>
<organism>
    <name type="scientific">Escherichia coli (strain ATCC 8739 / DSM 1576 / NBRC 3972 / NCIMB 8545 / WDCM 00012 / Crooks)</name>
    <dbReference type="NCBI Taxonomy" id="481805"/>
    <lineage>
        <taxon>Bacteria</taxon>
        <taxon>Pseudomonadati</taxon>
        <taxon>Pseudomonadota</taxon>
        <taxon>Gammaproteobacteria</taxon>
        <taxon>Enterobacterales</taxon>
        <taxon>Enterobacteriaceae</taxon>
        <taxon>Escherichia</taxon>
    </lineage>
</organism>
<gene>
    <name evidence="1" type="primary">matP</name>
    <name type="ordered locus">EcolC_2640</name>
</gene>
<sequence length="150" mass="17693">MKYQQLENLESGWKWKYLVKKHREGELITRYIEASAAQEAVDVLLSLENEPVLVNGWIDKHMNPELVNRMKQTIRARRKRHFNAEHQHTRKKSIDLEFIVWQRLAGLAQRRGKTLSETIVQLIEDAENKEKYANKMSSLKQDLQALLGKE</sequence>
<reference key="1">
    <citation type="submission" date="2008-02" db="EMBL/GenBank/DDBJ databases">
        <title>Complete sequence of Escherichia coli C str. ATCC 8739.</title>
        <authorList>
            <person name="Copeland A."/>
            <person name="Lucas S."/>
            <person name="Lapidus A."/>
            <person name="Glavina del Rio T."/>
            <person name="Dalin E."/>
            <person name="Tice H."/>
            <person name="Bruce D."/>
            <person name="Goodwin L."/>
            <person name="Pitluck S."/>
            <person name="Kiss H."/>
            <person name="Brettin T."/>
            <person name="Detter J.C."/>
            <person name="Han C."/>
            <person name="Kuske C.R."/>
            <person name="Schmutz J."/>
            <person name="Larimer F."/>
            <person name="Land M."/>
            <person name="Hauser L."/>
            <person name="Kyrpides N."/>
            <person name="Mikhailova N."/>
            <person name="Ingram L."/>
            <person name="Richardson P."/>
        </authorList>
    </citation>
    <scope>NUCLEOTIDE SEQUENCE [LARGE SCALE GENOMIC DNA]</scope>
    <source>
        <strain>ATCC 8739 / DSM 1576 / NBRC 3972 / NCIMB 8545 / WDCM 00012 / Crooks</strain>
    </source>
</reference>
<accession>B1IVX6</accession>
<evidence type="ECO:0000255" key="1">
    <source>
        <dbReference type="HAMAP-Rule" id="MF_01073"/>
    </source>
</evidence>
<proteinExistence type="inferred from homology"/>
<feature type="chain" id="PRO_1000084506" description="Macrodomain Ter protein">
    <location>
        <begin position="1"/>
        <end position="150"/>
    </location>
</feature>
<comment type="function">
    <text evidence="1">Required for spatial organization of the terminus region of the chromosome (Ter macrodomain) during the cell cycle. Prevents early segregation of duplicated Ter macrodomains during cell division. Binds specifically to matS, which is a 13 bp signature motif repeated within the Ter macrodomain.</text>
</comment>
<comment type="subunit">
    <text evidence="1">Homodimer.</text>
</comment>
<comment type="subcellular location">
    <subcellularLocation>
        <location evidence="1">Cytoplasm</location>
    </subcellularLocation>
</comment>
<comment type="similarity">
    <text evidence="1">Belongs to the MatP family.</text>
</comment>
<dbReference type="EMBL" id="CP000946">
    <property type="protein sequence ID" value="ACA78270.1"/>
    <property type="molecule type" value="Genomic_DNA"/>
</dbReference>
<dbReference type="RefSeq" id="WP_000877161.1">
    <property type="nucleotide sequence ID" value="NZ_MTFT01000009.1"/>
</dbReference>
<dbReference type="SMR" id="B1IVX6"/>
<dbReference type="GeneID" id="93776458"/>
<dbReference type="KEGG" id="ecl:EcolC_2640"/>
<dbReference type="HOGENOM" id="CLU_142157_0_0_6"/>
<dbReference type="GO" id="GO:0005737">
    <property type="term" value="C:cytoplasm"/>
    <property type="evidence" value="ECO:0007669"/>
    <property type="project" value="UniProtKB-SubCell"/>
</dbReference>
<dbReference type="GO" id="GO:0043565">
    <property type="term" value="F:sequence-specific DNA binding"/>
    <property type="evidence" value="ECO:0007669"/>
    <property type="project" value="UniProtKB-UniRule"/>
</dbReference>
<dbReference type="GO" id="GO:0051301">
    <property type="term" value="P:cell division"/>
    <property type="evidence" value="ECO:0007669"/>
    <property type="project" value="UniProtKB-UniRule"/>
</dbReference>
<dbReference type="GO" id="GO:0006355">
    <property type="term" value="P:regulation of DNA-templated transcription"/>
    <property type="evidence" value="ECO:0007669"/>
    <property type="project" value="InterPro"/>
</dbReference>
<dbReference type="FunFam" id="1.10.1220.10:FF:000004">
    <property type="entry name" value="Macrodomain Ter protein"/>
    <property type="match status" value="1"/>
</dbReference>
<dbReference type="FunFam" id="1.20.1270.380:FF:000001">
    <property type="entry name" value="Macrodomain Ter protein"/>
    <property type="match status" value="1"/>
</dbReference>
<dbReference type="Gene3D" id="1.20.1270.380">
    <property type="entry name" value="MatP, N-terminal domain"/>
    <property type="match status" value="1"/>
</dbReference>
<dbReference type="Gene3D" id="1.10.1220.10">
    <property type="entry name" value="Met repressor-like"/>
    <property type="match status" value="1"/>
</dbReference>
<dbReference type="HAMAP" id="MF_01073">
    <property type="entry name" value="MatP"/>
    <property type="match status" value="1"/>
</dbReference>
<dbReference type="InterPro" id="IPR013321">
    <property type="entry name" value="Arc_rbn_hlx_hlx"/>
</dbReference>
<dbReference type="InterPro" id="IPR009390">
    <property type="entry name" value="MatP"/>
</dbReference>
<dbReference type="InterPro" id="IPR035375">
    <property type="entry name" value="MatP_C"/>
</dbReference>
<dbReference type="InterPro" id="IPR035087">
    <property type="entry name" value="MatP_N"/>
</dbReference>
<dbReference type="InterPro" id="IPR038339">
    <property type="entry name" value="MatP_N_sf"/>
</dbReference>
<dbReference type="NCBIfam" id="NF003471">
    <property type="entry name" value="PRK05097.1"/>
    <property type="match status" value="1"/>
</dbReference>
<dbReference type="Pfam" id="PF06303">
    <property type="entry name" value="MatP"/>
    <property type="match status" value="1"/>
</dbReference>
<dbReference type="Pfam" id="PF17414">
    <property type="entry name" value="MatP_C"/>
    <property type="match status" value="1"/>
</dbReference>